<dbReference type="EC" id="1.-.-.-" evidence="1"/>
<dbReference type="EMBL" id="AB538860">
    <property type="protein sequence ID" value="BAJ19050.1"/>
    <property type="molecule type" value="Genomic_DNA"/>
</dbReference>
<dbReference type="PDB" id="8T7J">
    <property type="method" value="X-ray"/>
    <property type="resolution" value="2.40 A"/>
    <property type="chains" value="A/B/C/D=1-399"/>
</dbReference>
<dbReference type="PDBsum" id="8T7J"/>
<dbReference type="SMR" id="E1CG36"/>
<dbReference type="GO" id="GO:0004125">
    <property type="term" value="F:L-seryl-tRNA(Sec) selenium transferase activity"/>
    <property type="evidence" value="ECO:0007669"/>
    <property type="project" value="TreeGrafter"/>
</dbReference>
<dbReference type="GO" id="GO:0004497">
    <property type="term" value="F:monooxygenase activity"/>
    <property type="evidence" value="ECO:0007669"/>
    <property type="project" value="UniProtKB-KW"/>
</dbReference>
<dbReference type="GO" id="GO:0017000">
    <property type="term" value="P:antibiotic biosynthetic process"/>
    <property type="evidence" value="ECO:0007669"/>
    <property type="project" value="UniProtKB-KW"/>
</dbReference>
<dbReference type="Gene3D" id="3.40.640.10">
    <property type="entry name" value="Type I PLP-dependent aspartate aminotransferase-like (Major domain)"/>
    <property type="match status" value="1"/>
</dbReference>
<dbReference type="InterPro" id="IPR015424">
    <property type="entry name" value="PyrdxlP-dep_Trfase"/>
</dbReference>
<dbReference type="InterPro" id="IPR015421">
    <property type="entry name" value="PyrdxlP-dep_Trfase_major"/>
</dbReference>
<dbReference type="InterPro" id="IPR018319">
    <property type="entry name" value="SelA-like"/>
</dbReference>
<dbReference type="PANTHER" id="PTHR32328">
    <property type="entry name" value="L-SERYL-TRNA(SEC) SELENIUM TRANSFERASE"/>
    <property type="match status" value="1"/>
</dbReference>
<dbReference type="PANTHER" id="PTHR32328:SF0">
    <property type="entry name" value="L-SERYL-TRNA(SEC) SELENIUM TRANSFERASE"/>
    <property type="match status" value="1"/>
</dbReference>
<dbReference type="Pfam" id="PF03841">
    <property type="entry name" value="SelA"/>
    <property type="match status" value="1"/>
</dbReference>
<dbReference type="SUPFAM" id="SSF53383">
    <property type="entry name" value="PLP-dependent transferases"/>
    <property type="match status" value="1"/>
</dbReference>
<name>CAP15_STRSQ</name>
<comment type="function">
    <text evidence="1">Monooxygenase-decarboxylase involved in the biosynthesis of the capuramycin-type nucleoside antibiotic A-503083 (PubMed:29343643). Catalyzes the oxidative decarboxylation of 5'-C-glycyluridine (GlyU) to uridine-5'-carboxamide (CarU) (PubMed:29343643). Is stereospecific for the (5'S,6'R)-diastereomer of GlyU (PubMed:29343643). Directly incorporates a single oxygen atom from O(2) into the product CarU (PubMed:29343643).</text>
</comment>
<comment type="catalytic activity">
    <reaction evidence="1">
        <text>(5'S,6'R)-C-glycyluridine + O2 = uridine-5'-carboxamide + CO2 + H2O</text>
        <dbReference type="Rhea" id="RHEA:77179"/>
        <dbReference type="ChEBI" id="CHEBI:15377"/>
        <dbReference type="ChEBI" id="CHEBI:15379"/>
        <dbReference type="ChEBI" id="CHEBI:16526"/>
        <dbReference type="ChEBI" id="CHEBI:195553"/>
        <dbReference type="ChEBI" id="CHEBI:195554"/>
    </reaction>
    <physiologicalReaction direction="left-to-right" evidence="1">
        <dbReference type="Rhea" id="RHEA:77180"/>
    </physiologicalReaction>
</comment>
<comment type="cofactor">
    <cofactor evidence="1 2">
        <name>pyridoxal 5'-phosphate</name>
        <dbReference type="ChEBI" id="CHEBI:597326"/>
    </cofactor>
    <text evidence="1">Requires pyridoxal phosphate as an oxygenase cofactor.</text>
</comment>
<comment type="activity regulation">
    <text evidence="1">Activity is dependent on phosphate.</text>
</comment>
<comment type="biophysicochemical properties">
    <kinetics>
        <KM evidence="1">560 uM for (5'S,6'R)-C-glycyluridine</KM>
        <text evidence="1">kcat is 0.93 min(-1) with (5'S,6'R)-C-glycyluridine as substrate.</text>
    </kinetics>
    <phDependence>
        <text evidence="1">Optimum pH is 7.5.</text>
    </phDependence>
</comment>
<comment type="pathway">
    <text evidence="6">Antibiotic biosynthesis.</text>
</comment>
<comment type="subunit">
    <text evidence="2">Homooctamer; tetramer of homodimers.</text>
</comment>
<comment type="similarity">
    <text evidence="5">Belongs to the SelA family.</text>
</comment>
<feature type="chain" id="PRO_0000459785" description="5'-C-glycyluridine monooxygenase-decarboxylase">
    <location>
        <begin position="1"/>
        <end position="399"/>
    </location>
</feature>
<feature type="binding site" evidence="2 7">
    <location>
        <position position="179"/>
    </location>
    <ligand>
        <name>phosphate</name>
        <dbReference type="ChEBI" id="CHEBI:43474"/>
    </ligand>
</feature>
<feature type="binding site" evidence="2 7">
    <location>
        <position position="318"/>
    </location>
    <ligand>
        <name>phosphate</name>
        <dbReference type="ChEBI" id="CHEBI:43474"/>
    </ligand>
</feature>
<feature type="binding site" evidence="2">
    <location>
        <position position="322"/>
    </location>
    <ligand>
        <name>phosphate</name>
        <dbReference type="ChEBI" id="CHEBI:43474"/>
    </ligand>
</feature>
<feature type="binding site" evidence="2 7">
    <location>
        <position position="353"/>
    </location>
    <ligand>
        <name>phosphate</name>
        <dbReference type="ChEBI" id="CHEBI:43474"/>
    </ligand>
</feature>
<feature type="binding site" evidence="2 7">
    <location>
        <position position="367"/>
    </location>
    <ligand>
        <name>phosphate</name>
        <dbReference type="ChEBI" id="CHEBI:43474"/>
    </ligand>
</feature>
<feature type="modified residue" description="N6-(pyridoxal phosphate)lysine" evidence="2">
    <location>
        <position position="230"/>
    </location>
</feature>
<feature type="mutagenesis site" description="20-fold decrease in specific activity." evidence="1">
    <original>K</original>
    <variation>A</variation>
    <location>
        <position position="230"/>
    </location>
</feature>
<feature type="mutagenesis site" description="Loss of activity." evidence="1">
    <original>K</original>
    <variation>A</variation>
    <location>
        <position position="262"/>
    </location>
</feature>
<feature type="mutagenesis site" description="Loss of activity." evidence="1">
    <original>K</original>
    <variation>A</variation>
    <location>
        <position position="265"/>
    </location>
</feature>
<feature type="mutagenesis site" description="No change in activity." evidence="1">
    <original>K</original>
    <variation>A</variation>
    <location>
        <position position="303"/>
    </location>
</feature>
<feature type="helix" evidence="8">
    <location>
        <begin position="21"/>
        <end position="24"/>
    </location>
</feature>
<feature type="strand" evidence="8">
    <location>
        <begin position="29"/>
        <end position="33"/>
    </location>
</feature>
<feature type="helix" evidence="8">
    <location>
        <begin position="37"/>
        <end position="39"/>
    </location>
</feature>
<feature type="helix" evidence="8">
    <location>
        <begin position="46"/>
        <end position="55"/>
    </location>
</feature>
<feature type="helix" evidence="8">
    <location>
        <begin position="62"/>
        <end position="77"/>
    </location>
</feature>
<feature type="strand" evidence="8">
    <location>
        <begin position="79"/>
        <end position="87"/>
    </location>
</feature>
<feature type="helix" evidence="8">
    <location>
        <begin position="88"/>
        <end position="101"/>
    </location>
</feature>
<feature type="helix" evidence="8">
    <location>
        <begin position="105"/>
        <end position="110"/>
    </location>
</feature>
<feature type="strand" evidence="8">
    <location>
        <begin position="120"/>
        <end position="124"/>
    </location>
</feature>
<feature type="helix" evidence="8">
    <location>
        <begin position="125"/>
        <end position="127"/>
    </location>
</feature>
<feature type="helix" evidence="8">
    <location>
        <begin position="136"/>
        <end position="142"/>
    </location>
</feature>
<feature type="strand" evidence="8">
    <location>
        <begin position="146"/>
        <end position="152"/>
    </location>
</feature>
<feature type="helix" evidence="8">
    <location>
        <begin position="158"/>
        <end position="163"/>
    </location>
</feature>
<feature type="strand" evidence="8">
    <location>
        <begin position="169"/>
        <end position="175"/>
    </location>
</feature>
<feature type="turn" evidence="8">
    <location>
        <begin position="178"/>
        <end position="180"/>
    </location>
</feature>
<feature type="helix" evidence="8">
    <location>
        <begin position="189"/>
        <end position="199"/>
    </location>
</feature>
<feature type="strand" evidence="8">
    <location>
        <begin position="203"/>
        <end position="206"/>
    </location>
</feature>
<feature type="helix" evidence="8">
    <location>
        <begin position="215"/>
        <end position="218"/>
    </location>
</feature>
<feature type="strand" evidence="8">
    <location>
        <begin position="222"/>
        <end position="227"/>
    </location>
</feature>
<feature type="strand" evidence="8">
    <location>
        <begin position="238"/>
        <end position="242"/>
    </location>
</feature>
<feature type="helix" evidence="8">
    <location>
        <begin position="244"/>
        <end position="252"/>
    </location>
</feature>
<feature type="helix" evidence="8">
    <location>
        <begin position="253"/>
        <end position="255"/>
    </location>
</feature>
<feature type="turn" evidence="8">
    <location>
        <begin position="256"/>
        <end position="260"/>
    </location>
</feature>
<feature type="helix" evidence="8">
    <location>
        <begin position="265"/>
        <end position="278"/>
    </location>
</feature>
<feature type="helix" evidence="8">
    <location>
        <begin position="283"/>
        <end position="302"/>
    </location>
</feature>
<feature type="strand" evidence="8">
    <location>
        <begin position="307"/>
        <end position="313"/>
    </location>
</feature>
<feature type="strand" evidence="8">
    <location>
        <begin position="321"/>
        <end position="327"/>
    </location>
</feature>
<feature type="helix" evidence="8">
    <location>
        <begin position="336"/>
        <end position="344"/>
    </location>
</feature>
<feature type="strand" evidence="8">
    <location>
        <begin position="346"/>
        <end position="348"/>
    </location>
</feature>
<feature type="strand" evidence="8">
    <location>
        <begin position="350"/>
        <end position="353"/>
    </location>
</feature>
<feature type="turn" evidence="8">
    <location>
        <begin position="355"/>
        <end position="360"/>
    </location>
</feature>
<feature type="strand" evidence="8">
    <location>
        <begin position="361"/>
        <end position="364"/>
    </location>
</feature>
<feature type="helix" evidence="8">
    <location>
        <begin position="371"/>
        <end position="382"/>
    </location>
</feature>
<organism>
    <name type="scientific">Streptomyces sp</name>
    <dbReference type="NCBI Taxonomy" id="1931"/>
    <lineage>
        <taxon>Bacteria</taxon>
        <taxon>Bacillati</taxon>
        <taxon>Actinomycetota</taxon>
        <taxon>Actinomycetes</taxon>
        <taxon>Kitasatosporales</taxon>
        <taxon>Streptomycetaceae</taxon>
        <taxon>Streptomyces</taxon>
    </lineage>
</organism>
<reference key="1">
    <citation type="submission" date="2009-12" db="EMBL/GenBank/DDBJ databases">
        <title>An ATP-independent strategy for carboxylic acid activation and amide bond formation revealed upon characterization of the A-503083 biosynthetic gene cluster.</title>
        <authorList>
            <person name="Funabashi M."/>
            <person name="Nonaka K."/>
            <person name="Hosobuchi M."/>
            <person name="Fujita Y."/>
            <person name="Shibata T."/>
            <person name="Chi X."/>
            <person name="Yang Z."/>
            <person name="Van Lanen S.G."/>
        </authorList>
    </citation>
    <scope>NUCLEOTIDE SEQUENCE [GENOMIC DNA]</scope>
    <source>
        <strain>SANK 62799</strain>
    </source>
</reference>
<reference key="2">
    <citation type="journal article" date="2018" name="Proc. Natl. Acad. Sci. U.S.A.">
        <title>Pyridoxal-5'-phosphate as an oxygenase cofactor: Discovery of a carboxamide-forming, alpha-amino acid monooxygenase-decarboxylase.</title>
        <authorList>
            <person name="Huang Y."/>
            <person name="Liu X."/>
            <person name="Cui Z."/>
            <person name="Wiegmann D."/>
            <person name="Niro G."/>
            <person name="Ducho C."/>
            <person name="Song Y."/>
            <person name="Yang Z."/>
            <person name="Van Lanen S.G."/>
        </authorList>
    </citation>
    <scope>FUNCTION</scope>
    <scope>CATALYTIC ACTIVITY</scope>
    <scope>COFACTOR</scope>
    <scope>ACTIVITY REGULATION</scope>
    <scope>BIOPHYSICOCHEMICAL PROPERTIES</scope>
    <scope>MUTAGENESIS OF LYS-230; LYS-262; LYS-265 AND LYS-303</scope>
    <source>
        <strain>SANK 62799</strain>
    </source>
</reference>
<reference evidence="7" key="3">
    <citation type="journal article" date="2023" name="Biochemistry">
        <title>Structure of the oxygen, pyridoxal phosphate-dependent capuramycin biosynthetic protein Cap15.</title>
        <authorList>
            <person name="Daniel-Ivad P.G."/>
            <person name="Van Lanen S."/>
            <person name="Ryan K.S."/>
        </authorList>
    </citation>
    <scope>X-RAY CRYSTALLOGRAPHY (2.40 ANGSTROMS) IN COMPLEX WITH PHOSPHATE</scope>
    <scope>COFACTOR</scope>
    <scope>SUBUNIT</scope>
    <source>
        <strain>SANK 62799</strain>
    </source>
</reference>
<evidence type="ECO:0000269" key="1">
    <source>
    </source>
</evidence>
<evidence type="ECO:0000269" key="2">
    <source>
    </source>
</evidence>
<evidence type="ECO:0000303" key="3">
    <source>
    </source>
</evidence>
<evidence type="ECO:0000303" key="4">
    <source ref="1"/>
</evidence>
<evidence type="ECO:0000305" key="5"/>
<evidence type="ECO:0000305" key="6">
    <source>
    </source>
</evidence>
<evidence type="ECO:0007744" key="7">
    <source>
        <dbReference type="PDB" id="8T7J"/>
    </source>
</evidence>
<evidence type="ECO:0007829" key="8">
    <source>
        <dbReference type="PDB" id="8T7J"/>
    </source>
</evidence>
<proteinExistence type="evidence at protein level"/>
<protein>
    <recommendedName>
        <fullName evidence="5">5'-C-glycyluridine monooxygenase-decarboxylase</fullName>
        <ecNumber evidence="1">1.-.-.-</ecNumber>
    </recommendedName>
    <alternativeName>
        <fullName evidence="3">PLP-dependent (5'S,6'R)-GlyU:O2 monooxygenase-decarboxylase</fullName>
    </alternativeName>
</protein>
<sequence length="399" mass="42004">MNELEFHPHADRRTGSHTMEYQHLGVVPVVSAQANSTPLGGCTLSDGVIRAMGDAARFHVDMEQLWQAAGSFLAEATGSEDACPVTGAAAGMAIAVAACVAGTDGLRVQRLPDPGDQPNEIVLQKGHSISYGGAPLAQMIALGGGRAVEVGAVNETPRSHVASAVTRRTAALVYVTSRTHAVHRKGVPLDELVAIGREHGVPVIVDAAGEGGLRRWVASGADLVIYSGPKMLGAPTSGFICGRGDLVAACRAQYSGIARPMKVGKENLLGLLQAVREYTAVPEEQRAAEQLERMTKLAARLDKIPGLSARTAQDDSGRTIYRVLLTVDPAAAGRSAATLAEEMRAGIPSIYLRDFKLHLGQLEVDPRALSPDGEESVVRRLEELLLDHGGAPTGMEDAR</sequence>
<accession>E1CG36</accession>
<keyword id="KW-0002">3D-structure</keyword>
<keyword id="KW-0045">Antibiotic biosynthesis</keyword>
<keyword id="KW-0503">Monooxygenase</keyword>
<keyword id="KW-0560">Oxidoreductase</keyword>
<keyword id="KW-0663">Pyridoxal phosphate</keyword>
<gene>
    <name evidence="3" type="primary">cap15</name>
    <name evidence="4" type="synonym">ORF15</name>
</gene>